<name>ALR1_STAAC</name>
<feature type="chain" id="PRO_0000114567" description="Alanine racemase 1">
    <location>
        <begin position="1"/>
        <end position="382"/>
    </location>
</feature>
<feature type="active site" description="Proton acceptor; specific for D-alanine" evidence="1">
    <location>
        <position position="39"/>
    </location>
</feature>
<feature type="active site" description="Proton acceptor; specific for L-alanine" evidence="1">
    <location>
        <position position="265"/>
    </location>
</feature>
<feature type="binding site" evidence="1">
    <location>
        <position position="138"/>
    </location>
    <ligand>
        <name>substrate</name>
    </ligand>
</feature>
<feature type="binding site" evidence="1">
    <location>
        <position position="312"/>
    </location>
    <ligand>
        <name>substrate</name>
    </ligand>
</feature>
<feature type="modified residue" description="N6-(pyridoxal phosphate)lysine" evidence="1">
    <location>
        <position position="39"/>
    </location>
</feature>
<feature type="strand" evidence="3">
    <location>
        <begin position="7"/>
        <end position="14"/>
    </location>
</feature>
<feature type="helix" evidence="3">
    <location>
        <begin position="15"/>
        <end position="28"/>
    </location>
</feature>
<feature type="strand" evidence="3">
    <location>
        <begin position="32"/>
        <end position="37"/>
    </location>
</feature>
<feature type="helix" evidence="3">
    <location>
        <begin position="39"/>
        <end position="43"/>
    </location>
</feature>
<feature type="helix" evidence="3">
    <location>
        <begin position="47"/>
        <end position="56"/>
    </location>
</feature>
<feature type="strand" evidence="3">
    <location>
        <begin position="61"/>
        <end position="66"/>
    </location>
</feature>
<feature type="helix" evidence="3">
    <location>
        <begin position="67"/>
        <end position="74"/>
    </location>
</feature>
<feature type="turn" evidence="3">
    <location>
        <begin position="75"/>
        <end position="77"/>
    </location>
</feature>
<feature type="strand" evidence="3">
    <location>
        <begin position="80"/>
        <end position="84"/>
    </location>
</feature>
<feature type="helix" evidence="3">
    <location>
        <begin position="90"/>
        <end position="92"/>
    </location>
</feature>
<feature type="helix" evidence="3">
    <location>
        <begin position="93"/>
        <end position="98"/>
    </location>
</feature>
<feature type="strand" evidence="3">
    <location>
        <begin position="101"/>
        <end position="105"/>
    </location>
</feature>
<feature type="helix" evidence="3">
    <location>
        <begin position="108"/>
        <end position="116"/>
    </location>
</feature>
<feature type="strand" evidence="3">
    <location>
        <begin position="126"/>
        <end position="132"/>
    </location>
</feature>
<feature type="strand" evidence="3">
    <location>
        <begin position="139"/>
        <end position="141"/>
    </location>
</feature>
<feature type="helix" evidence="3">
    <location>
        <begin position="144"/>
        <end position="154"/>
    </location>
</feature>
<feature type="strand" evidence="3">
    <location>
        <begin position="160"/>
        <end position="166"/>
    </location>
</feature>
<feature type="strand" evidence="3">
    <location>
        <begin position="174"/>
        <end position="177"/>
    </location>
</feature>
<feature type="helix" evidence="3">
    <location>
        <begin position="178"/>
        <end position="191"/>
    </location>
</feature>
<feature type="strand" evidence="3">
    <location>
        <begin position="197"/>
        <end position="202"/>
    </location>
</feature>
<feature type="helix" evidence="3">
    <location>
        <begin position="204"/>
        <end position="209"/>
    </location>
</feature>
<feature type="helix" evidence="3">
    <location>
        <begin position="222"/>
        <end position="225"/>
    </location>
</feature>
<feature type="helix" evidence="3">
    <location>
        <begin position="231"/>
        <end position="236"/>
    </location>
</feature>
<feature type="strand" evidence="3">
    <location>
        <begin position="245"/>
        <end position="250"/>
    </location>
</feature>
<feature type="strand" evidence="3">
    <location>
        <begin position="253"/>
        <end position="257"/>
    </location>
</feature>
<feature type="strand" evidence="3">
    <location>
        <begin position="275"/>
        <end position="281"/>
    </location>
</feature>
<feature type="helix" evidence="3">
    <location>
        <begin position="284"/>
        <end position="286"/>
    </location>
</feature>
<feature type="helix" evidence="3">
    <location>
        <begin position="290"/>
        <end position="292"/>
    </location>
</feature>
<feature type="strand" evidence="3">
    <location>
        <begin position="296"/>
        <end position="299"/>
    </location>
</feature>
<feature type="strand" evidence="3">
    <location>
        <begin position="302"/>
        <end position="308"/>
    </location>
</feature>
<feature type="strand" evidence="3">
    <location>
        <begin position="315"/>
        <end position="319"/>
    </location>
</feature>
<feature type="strand" evidence="3">
    <location>
        <begin position="328"/>
        <end position="332"/>
    </location>
</feature>
<feature type="strand" evidence="3">
    <location>
        <begin position="336"/>
        <end position="338"/>
    </location>
</feature>
<feature type="helix" evidence="3">
    <location>
        <begin position="342"/>
        <end position="348"/>
    </location>
</feature>
<feature type="helix" evidence="3">
    <location>
        <begin position="353"/>
        <end position="359"/>
    </location>
</feature>
<feature type="strand" evidence="3">
    <location>
        <begin position="366"/>
        <end position="370"/>
    </location>
</feature>
<feature type="strand" evidence="3">
    <location>
        <begin position="373"/>
        <end position="377"/>
    </location>
</feature>
<feature type="helix" evidence="3">
    <location>
        <begin position="379"/>
        <end position="381"/>
    </location>
</feature>
<protein>
    <recommendedName>
        <fullName evidence="1">Alanine racemase 1</fullName>
        <ecNumber evidence="1">5.1.1.1</ecNumber>
    </recommendedName>
</protein>
<organism>
    <name type="scientific">Staphylococcus aureus (strain COL)</name>
    <dbReference type="NCBI Taxonomy" id="93062"/>
    <lineage>
        <taxon>Bacteria</taxon>
        <taxon>Bacillati</taxon>
        <taxon>Bacillota</taxon>
        <taxon>Bacilli</taxon>
        <taxon>Bacillales</taxon>
        <taxon>Staphylococcaceae</taxon>
        <taxon>Staphylococcus</taxon>
    </lineage>
</organism>
<keyword id="KW-0002">3D-structure</keyword>
<keyword id="KW-0413">Isomerase</keyword>
<keyword id="KW-0663">Pyridoxal phosphate</keyword>
<accession>Q5HED1</accession>
<dbReference type="EC" id="5.1.1.1" evidence="1"/>
<dbReference type="EMBL" id="CP000046">
    <property type="protein sequence ID" value="AAW37022.1"/>
    <property type="molecule type" value="Genomic_DNA"/>
</dbReference>
<dbReference type="RefSeq" id="WP_001281145.1">
    <property type="nucleotide sequence ID" value="NZ_JBGOFO010000007.1"/>
</dbReference>
<dbReference type="PDB" id="3OO2">
    <property type="method" value="X-ray"/>
    <property type="resolution" value="2.37 A"/>
    <property type="chains" value="A/B=1-382"/>
</dbReference>
<dbReference type="PDBsum" id="3OO2"/>
<dbReference type="SMR" id="Q5HED1"/>
<dbReference type="KEGG" id="sac:SACOL2060"/>
<dbReference type="HOGENOM" id="CLU_028393_2_1_9"/>
<dbReference type="UniPathway" id="UPA00042">
    <property type="reaction ID" value="UER00497"/>
</dbReference>
<dbReference type="EvolutionaryTrace" id="Q5HED1"/>
<dbReference type="Proteomes" id="UP000000530">
    <property type="component" value="Chromosome"/>
</dbReference>
<dbReference type="GO" id="GO:0005829">
    <property type="term" value="C:cytosol"/>
    <property type="evidence" value="ECO:0007669"/>
    <property type="project" value="TreeGrafter"/>
</dbReference>
<dbReference type="GO" id="GO:0008784">
    <property type="term" value="F:alanine racemase activity"/>
    <property type="evidence" value="ECO:0007669"/>
    <property type="project" value="UniProtKB-UniRule"/>
</dbReference>
<dbReference type="GO" id="GO:0030170">
    <property type="term" value="F:pyridoxal phosphate binding"/>
    <property type="evidence" value="ECO:0007669"/>
    <property type="project" value="UniProtKB-UniRule"/>
</dbReference>
<dbReference type="GO" id="GO:0030632">
    <property type="term" value="P:D-alanine biosynthetic process"/>
    <property type="evidence" value="ECO:0007669"/>
    <property type="project" value="UniProtKB-UniRule"/>
</dbReference>
<dbReference type="GO" id="GO:0009252">
    <property type="term" value="P:peptidoglycan biosynthetic process"/>
    <property type="evidence" value="ECO:0007669"/>
    <property type="project" value="TreeGrafter"/>
</dbReference>
<dbReference type="CDD" id="cd00430">
    <property type="entry name" value="PLPDE_III_AR"/>
    <property type="match status" value="1"/>
</dbReference>
<dbReference type="FunFam" id="2.40.37.10:FF:000006">
    <property type="entry name" value="Alanine racemase"/>
    <property type="match status" value="1"/>
</dbReference>
<dbReference type="FunFam" id="3.20.20.10:FF:000002">
    <property type="entry name" value="Alanine racemase"/>
    <property type="match status" value="1"/>
</dbReference>
<dbReference type="Gene3D" id="3.20.20.10">
    <property type="entry name" value="Alanine racemase"/>
    <property type="match status" value="1"/>
</dbReference>
<dbReference type="Gene3D" id="2.40.37.10">
    <property type="entry name" value="Lyase, Ornithine Decarboxylase, Chain A, domain 1"/>
    <property type="match status" value="1"/>
</dbReference>
<dbReference type="HAMAP" id="MF_01201">
    <property type="entry name" value="Ala_racemase"/>
    <property type="match status" value="1"/>
</dbReference>
<dbReference type="InterPro" id="IPR000821">
    <property type="entry name" value="Ala_racemase"/>
</dbReference>
<dbReference type="InterPro" id="IPR009006">
    <property type="entry name" value="Ala_racemase/Decarboxylase_C"/>
</dbReference>
<dbReference type="InterPro" id="IPR011079">
    <property type="entry name" value="Ala_racemase_C"/>
</dbReference>
<dbReference type="InterPro" id="IPR001608">
    <property type="entry name" value="Ala_racemase_N"/>
</dbReference>
<dbReference type="InterPro" id="IPR020622">
    <property type="entry name" value="Ala_racemase_pyridoxalP-BS"/>
</dbReference>
<dbReference type="InterPro" id="IPR029066">
    <property type="entry name" value="PLP-binding_barrel"/>
</dbReference>
<dbReference type="NCBIfam" id="TIGR00492">
    <property type="entry name" value="alr"/>
    <property type="match status" value="1"/>
</dbReference>
<dbReference type="PANTHER" id="PTHR30511">
    <property type="entry name" value="ALANINE RACEMASE"/>
    <property type="match status" value="1"/>
</dbReference>
<dbReference type="PANTHER" id="PTHR30511:SF0">
    <property type="entry name" value="ALANINE RACEMASE, CATABOLIC-RELATED"/>
    <property type="match status" value="1"/>
</dbReference>
<dbReference type="Pfam" id="PF00842">
    <property type="entry name" value="Ala_racemase_C"/>
    <property type="match status" value="1"/>
</dbReference>
<dbReference type="Pfam" id="PF01168">
    <property type="entry name" value="Ala_racemase_N"/>
    <property type="match status" value="1"/>
</dbReference>
<dbReference type="PRINTS" id="PR00992">
    <property type="entry name" value="ALARACEMASE"/>
</dbReference>
<dbReference type="SMART" id="SM01005">
    <property type="entry name" value="Ala_racemase_C"/>
    <property type="match status" value="1"/>
</dbReference>
<dbReference type="SUPFAM" id="SSF50621">
    <property type="entry name" value="Alanine racemase C-terminal domain-like"/>
    <property type="match status" value="1"/>
</dbReference>
<dbReference type="SUPFAM" id="SSF51419">
    <property type="entry name" value="PLP-binding barrel"/>
    <property type="match status" value="1"/>
</dbReference>
<dbReference type="PROSITE" id="PS00395">
    <property type="entry name" value="ALANINE_RACEMASE"/>
    <property type="match status" value="1"/>
</dbReference>
<reference key="1">
    <citation type="journal article" date="2005" name="J. Bacteriol.">
        <title>Insights on evolution of virulence and resistance from the complete genome analysis of an early methicillin-resistant Staphylococcus aureus strain and a biofilm-producing methicillin-resistant Staphylococcus epidermidis strain.</title>
        <authorList>
            <person name="Gill S.R."/>
            <person name="Fouts D.E."/>
            <person name="Archer G.L."/>
            <person name="Mongodin E.F."/>
            <person name="DeBoy R.T."/>
            <person name="Ravel J."/>
            <person name="Paulsen I.T."/>
            <person name="Kolonay J.F."/>
            <person name="Brinkac L.M."/>
            <person name="Beanan M.J."/>
            <person name="Dodson R.J."/>
            <person name="Daugherty S.C."/>
            <person name="Madupu R."/>
            <person name="Angiuoli S.V."/>
            <person name="Durkin A.S."/>
            <person name="Haft D.H."/>
            <person name="Vamathevan J.J."/>
            <person name="Khouri H."/>
            <person name="Utterback T.R."/>
            <person name="Lee C."/>
            <person name="Dimitrov G."/>
            <person name="Jiang L."/>
            <person name="Qin H."/>
            <person name="Weidman J."/>
            <person name="Tran K."/>
            <person name="Kang K.H."/>
            <person name="Hance I.R."/>
            <person name="Nelson K.E."/>
            <person name="Fraser C.M."/>
        </authorList>
    </citation>
    <scope>NUCLEOTIDE SEQUENCE [LARGE SCALE GENOMIC DNA]</scope>
    <source>
        <strain>COL</strain>
    </source>
</reference>
<reference key="2">
    <citation type="submission" date="2010-08" db="PDB data bank">
        <title>2.37 Angstrom resolution crystal structure of an alanine racemase (alr) from Staphylococcus aureus subsp. aureus COL.</title>
        <authorList>
            <consortium name="Center for structural genomics of infectious diseases (CSGID)"/>
        </authorList>
    </citation>
    <scope>X-RAY CRYSTALLOGRAPHY (2.37 ANGSTROMS)</scope>
    <scope>SUBUNIT</scope>
</reference>
<sequence length="382" mass="42823">MSDKYYRSAYMNVDLNAVASNFKVFSTLHPNKTVMAVVKANAYGLGSVKVARHLMENGATFFAVATLDEAIELRMHGITAKILVLGVLPAKDIDKAIQHRVALTVPSKQWLKEAIKNISGEQEKKLWLHIKLDTGMGRLGIKDTKTYQEVIEIIQQYEQLVFEGVFTHFACADEPGDMTTEQYQRFKDMVNEAIKPEYIHCQNSAGSLLMDCQFCNAIRPGISLYGYYPSEYVQQKVKVHLKPSVQLIANVVQTKTLQAGESVSYGATYTATDPTTIALLPIGYADGYLRIMQGSFVNVNGHQCEVIGRVCMDQTIVKVPDQVKAGDSVILIDNHRESPQSVEVVAEKQHTINYEVLCNLSRRLPRIYHDGDQRFVTNELLK</sequence>
<proteinExistence type="evidence at protein level"/>
<comment type="function">
    <text evidence="1">Catalyzes the interconversion of L-alanine and D-alanine. May also act on other amino acids.</text>
</comment>
<comment type="catalytic activity">
    <reaction evidence="1">
        <text>L-alanine = D-alanine</text>
        <dbReference type="Rhea" id="RHEA:20249"/>
        <dbReference type="ChEBI" id="CHEBI:57416"/>
        <dbReference type="ChEBI" id="CHEBI:57972"/>
        <dbReference type="EC" id="5.1.1.1"/>
    </reaction>
</comment>
<comment type="cofactor">
    <cofactor evidence="1">
        <name>pyridoxal 5'-phosphate</name>
        <dbReference type="ChEBI" id="CHEBI:597326"/>
    </cofactor>
</comment>
<comment type="pathway">
    <text evidence="1">Amino-acid biosynthesis; D-alanine biosynthesis; D-alanine from L-alanine: step 1/1.</text>
</comment>
<comment type="subunit">
    <text evidence="2">Homodimer.</text>
</comment>
<comment type="similarity">
    <text evidence="1">Belongs to the alanine racemase family.</text>
</comment>
<evidence type="ECO:0000255" key="1">
    <source>
        <dbReference type="HAMAP-Rule" id="MF_01201"/>
    </source>
</evidence>
<evidence type="ECO:0000305" key="2">
    <source ref="2"/>
</evidence>
<evidence type="ECO:0007829" key="3">
    <source>
        <dbReference type="PDB" id="3OO2"/>
    </source>
</evidence>
<gene>
    <name type="primary">alr1</name>
    <name type="synonym">alr</name>
    <name type="ordered locus">SACOL2060</name>
</gene>